<dbReference type="EC" id="2.7.8.7" evidence="1"/>
<dbReference type="EMBL" id="AJ965256">
    <property type="protein sequence ID" value="CAI82610.1"/>
    <property type="molecule type" value="Genomic_DNA"/>
</dbReference>
<dbReference type="RefSeq" id="WP_011308967.1">
    <property type="nucleotide sequence ID" value="NC_007356.1"/>
</dbReference>
<dbReference type="SMR" id="Q3ZZK3"/>
<dbReference type="KEGG" id="deh:cbdbA401"/>
<dbReference type="HOGENOM" id="CLU_089696_0_2_0"/>
<dbReference type="Proteomes" id="UP000000433">
    <property type="component" value="Chromosome"/>
</dbReference>
<dbReference type="GO" id="GO:0005737">
    <property type="term" value="C:cytoplasm"/>
    <property type="evidence" value="ECO:0007669"/>
    <property type="project" value="UniProtKB-SubCell"/>
</dbReference>
<dbReference type="GO" id="GO:0008897">
    <property type="term" value="F:holo-[acyl-carrier-protein] synthase activity"/>
    <property type="evidence" value="ECO:0007669"/>
    <property type="project" value="UniProtKB-UniRule"/>
</dbReference>
<dbReference type="GO" id="GO:0000287">
    <property type="term" value="F:magnesium ion binding"/>
    <property type="evidence" value="ECO:0007669"/>
    <property type="project" value="UniProtKB-UniRule"/>
</dbReference>
<dbReference type="GO" id="GO:0006633">
    <property type="term" value="P:fatty acid biosynthetic process"/>
    <property type="evidence" value="ECO:0007669"/>
    <property type="project" value="UniProtKB-UniRule"/>
</dbReference>
<dbReference type="Gene3D" id="3.90.470.20">
    <property type="entry name" value="4'-phosphopantetheinyl transferase domain"/>
    <property type="match status" value="1"/>
</dbReference>
<dbReference type="HAMAP" id="MF_00101">
    <property type="entry name" value="AcpS"/>
    <property type="match status" value="1"/>
</dbReference>
<dbReference type="InterPro" id="IPR008278">
    <property type="entry name" value="4-PPantetheinyl_Trfase_dom"/>
</dbReference>
<dbReference type="InterPro" id="IPR037143">
    <property type="entry name" value="4-PPantetheinyl_Trfase_dom_sf"/>
</dbReference>
<dbReference type="InterPro" id="IPR002582">
    <property type="entry name" value="ACPS"/>
</dbReference>
<dbReference type="InterPro" id="IPR004568">
    <property type="entry name" value="Ppantetheine-prot_Trfase_dom"/>
</dbReference>
<dbReference type="NCBIfam" id="TIGR00516">
    <property type="entry name" value="acpS"/>
    <property type="match status" value="1"/>
</dbReference>
<dbReference type="NCBIfam" id="TIGR00556">
    <property type="entry name" value="pantethn_trn"/>
    <property type="match status" value="1"/>
</dbReference>
<dbReference type="Pfam" id="PF01648">
    <property type="entry name" value="ACPS"/>
    <property type="match status" value="1"/>
</dbReference>
<dbReference type="SUPFAM" id="SSF56214">
    <property type="entry name" value="4'-phosphopantetheinyl transferase"/>
    <property type="match status" value="1"/>
</dbReference>
<accession>Q3ZZK3</accession>
<gene>
    <name evidence="1" type="primary">acpS</name>
    <name type="ordered locus">cbdbA401</name>
</gene>
<feature type="chain" id="PRO_0000228283" description="Holo-[acyl-carrier-protein] synthase">
    <location>
        <begin position="1"/>
        <end position="119"/>
    </location>
</feature>
<feature type="binding site" evidence="1">
    <location>
        <position position="7"/>
    </location>
    <ligand>
        <name>Mg(2+)</name>
        <dbReference type="ChEBI" id="CHEBI:18420"/>
    </ligand>
</feature>
<feature type="binding site" evidence="1">
    <location>
        <position position="53"/>
    </location>
    <ligand>
        <name>Mg(2+)</name>
        <dbReference type="ChEBI" id="CHEBI:18420"/>
    </ligand>
</feature>
<name>ACPS_DEHMC</name>
<sequence>MLYTGTDIIEIRRIKAAEARWGEHFLNRIFTPAELSLCKDRFPSLAARFAAKEAVIKVLSLPKNQSYTEIETLNLPEGQPSVNLYGQARDKANILGIKHLSISLSHCREYAIAMVVAQD</sequence>
<proteinExistence type="inferred from homology"/>
<reference key="1">
    <citation type="journal article" date="2005" name="Nat. Biotechnol.">
        <title>Genome sequence of the chlorinated compound-respiring bacterium Dehalococcoides species strain CBDB1.</title>
        <authorList>
            <person name="Kube M."/>
            <person name="Beck A."/>
            <person name="Zinder S.H."/>
            <person name="Kuhl H."/>
            <person name="Reinhardt R."/>
            <person name="Adrian L."/>
        </authorList>
    </citation>
    <scope>NUCLEOTIDE SEQUENCE [LARGE SCALE GENOMIC DNA]</scope>
    <source>
        <strain>CBDB1</strain>
    </source>
</reference>
<evidence type="ECO:0000255" key="1">
    <source>
        <dbReference type="HAMAP-Rule" id="MF_00101"/>
    </source>
</evidence>
<protein>
    <recommendedName>
        <fullName evidence="1">Holo-[acyl-carrier-protein] synthase</fullName>
        <shortName evidence="1">Holo-ACP synthase</shortName>
        <ecNumber evidence="1">2.7.8.7</ecNumber>
    </recommendedName>
    <alternativeName>
        <fullName evidence="1">4'-phosphopantetheinyl transferase AcpS</fullName>
    </alternativeName>
</protein>
<organism>
    <name type="scientific">Dehalococcoides mccartyi (strain CBDB1)</name>
    <dbReference type="NCBI Taxonomy" id="255470"/>
    <lineage>
        <taxon>Bacteria</taxon>
        <taxon>Bacillati</taxon>
        <taxon>Chloroflexota</taxon>
        <taxon>Dehalococcoidia</taxon>
        <taxon>Dehalococcoidales</taxon>
        <taxon>Dehalococcoidaceae</taxon>
        <taxon>Dehalococcoides</taxon>
    </lineage>
</organism>
<comment type="function">
    <text evidence="1">Transfers the 4'-phosphopantetheine moiety from coenzyme A to a Ser of acyl-carrier-protein.</text>
</comment>
<comment type="catalytic activity">
    <reaction evidence="1">
        <text>apo-[ACP] + CoA = holo-[ACP] + adenosine 3',5'-bisphosphate + H(+)</text>
        <dbReference type="Rhea" id="RHEA:12068"/>
        <dbReference type="Rhea" id="RHEA-COMP:9685"/>
        <dbReference type="Rhea" id="RHEA-COMP:9690"/>
        <dbReference type="ChEBI" id="CHEBI:15378"/>
        <dbReference type="ChEBI" id="CHEBI:29999"/>
        <dbReference type="ChEBI" id="CHEBI:57287"/>
        <dbReference type="ChEBI" id="CHEBI:58343"/>
        <dbReference type="ChEBI" id="CHEBI:64479"/>
        <dbReference type="EC" id="2.7.8.7"/>
    </reaction>
</comment>
<comment type="cofactor">
    <cofactor evidence="1">
        <name>Mg(2+)</name>
        <dbReference type="ChEBI" id="CHEBI:18420"/>
    </cofactor>
</comment>
<comment type="subcellular location">
    <subcellularLocation>
        <location evidence="1">Cytoplasm</location>
    </subcellularLocation>
</comment>
<comment type="similarity">
    <text evidence="1">Belongs to the P-Pant transferase superfamily. AcpS family.</text>
</comment>
<keyword id="KW-0963">Cytoplasm</keyword>
<keyword id="KW-0275">Fatty acid biosynthesis</keyword>
<keyword id="KW-0276">Fatty acid metabolism</keyword>
<keyword id="KW-0444">Lipid biosynthesis</keyword>
<keyword id="KW-0443">Lipid metabolism</keyword>
<keyword id="KW-0460">Magnesium</keyword>
<keyword id="KW-0479">Metal-binding</keyword>
<keyword id="KW-0808">Transferase</keyword>